<sequence>MKLWGGRFRKAENQLMEEFNKSFGYDCVLYKKDIEGSVAHVHMQVKCGLLTEEEGKSITEGLKGILEDVENGKLVLDGEYEDIHSFTEINLIQRIGDVGKKLHTARSRNDQVAVDMRLYAKEKANDLVGLISEFKATIKDVADKNPVMMPGYTHLQRAQVVTFKHHLMAYYSMFDRDEKRIKNAIEILDESPLGCGALAGTTHDIDRSITCEQLGFKKVVDNFMDGVSDRDYLLELMSDFSIIMMHLSRLSEELILWSSQEFGFVEIDDLYTTGSSIMPQKKNPDGAELIRGKTGRVYGNLFGLFTVMKGIPLAYNKDMQEDKEGFFDSVHTLEMCIQIMDRMIATLKVNEDKMKQAVKNGFLNATEVADYLVKNNVAFRDAHGIVGSIVIYCEDNKKAIEDLTLEELHKFSDAFKEDIYDFIDYESILNKGIKKNLK</sequence>
<organism>
    <name type="scientific">Clostridioides difficile (strain 630)</name>
    <name type="common">Peptoclostridium difficile</name>
    <dbReference type="NCBI Taxonomy" id="272563"/>
    <lineage>
        <taxon>Bacteria</taxon>
        <taxon>Bacillati</taxon>
        <taxon>Bacillota</taxon>
        <taxon>Clostridia</taxon>
        <taxon>Peptostreptococcales</taxon>
        <taxon>Peptostreptococcaceae</taxon>
        <taxon>Clostridioides</taxon>
    </lineage>
</organism>
<evidence type="ECO:0000255" key="1">
    <source>
        <dbReference type="HAMAP-Rule" id="MF_00006"/>
    </source>
</evidence>
<feature type="chain" id="PRO_0000321438" description="Argininosuccinate lyase">
    <location>
        <begin position="1"/>
        <end position="438"/>
    </location>
</feature>
<name>ARLY_CLOD6</name>
<gene>
    <name evidence="1" type="primary">argH</name>
    <name type="ordered locus">CD630_25000</name>
</gene>
<reference key="1">
    <citation type="journal article" date="2006" name="Nat. Genet.">
        <title>The multidrug-resistant human pathogen Clostridium difficile has a highly mobile, mosaic genome.</title>
        <authorList>
            <person name="Sebaihia M."/>
            <person name="Wren B.W."/>
            <person name="Mullany P."/>
            <person name="Fairweather N.F."/>
            <person name="Minton N."/>
            <person name="Stabler R."/>
            <person name="Thomson N.R."/>
            <person name="Roberts A.P."/>
            <person name="Cerdeno-Tarraga A.M."/>
            <person name="Wang H."/>
            <person name="Holden M.T.G."/>
            <person name="Wright A."/>
            <person name="Churcher C."/>
            <person name="Quail M.A."/>
            <person name="Baker S."/>
            <person name="Bason N."/>
            <person name="Brooks K."/>
            <person name="Chillingworth T."/>
            <person name="Cronin A."/>
            <person name="Davis P."/>
            <person name="Dowd L."/>
            <person name="Fraser A."/>
            <person name="Feltwell T."/>
            <person name="Hance Z."/>
            <person name="Holroyd S."/>
            <person name="Jagels K."/>
            <person name="Moule S."/>
            <person name="Mungall K."/>
            <person name="Price C."/>
            <person name="Rabbinowitsch E."/>
            <person name="Sharp S."/>
            <person name="Simmonds M."/>
            <person name="Stevens K."/>
            <person name="Unwin L."/>
            <person name="Whithead S."/>
            <person name="Dupuy B."/>
            <person name="Dougan G."/>
            <person name="Barrell B."/>
            <person name="Parkhill J."/>
        </authorList>
    </citation>
    <scope>NUCLEOTIDE SEQUENCE [LARGE SCALE GENOMIC DNA]</scope>
    <source>
        <strain>630</strain>
    </source>
</reference>
<dbReference type="EC" id="4.3.2.1" evidence="1"/>
<dbReference type="EMBL" id="AM180355">
    <property type="protein sequence ID" value="CAJ69386.2"/>
    <property type="molecule type" value="Genomic_DNA"/>
</dbReference>
<dbReference type="RefSeq" id="WP_009890714.1">
    <property type="nucleotide sequence ID" value="NZ_JAUPES010000003.1"/>
</dbReference>
<dbReference type="RefSeq" id="YP_001089013.2">
    <property type="nucleotide sequence ID" value="NC_009089.1"/>
</dbReference>
<dbReference type="SMR" id="Q182I5"/>
<dbReference type="STRING" id="272563.CD630_25000"/>
<dbReference type="EnsemblBacteria" id="CAJ69386">
    <property type="protein sequence ID" value="CAJ69386"/>
    <property type="gene ID" value="CD630_25000"/>
</dbReference>
<dbReference type="KEGG" id="cdf:CD630_25000"/>
<dbReference type="KEGG" id="pdc:CDIF630_02747"/>
<dbReference type="PATRIC" id="fig|272563.120.peg.2639"/>
<dbReference type="eggNOG" id="COG0165">
    <property type="taxonomic scope" value="Bacteria"/>
</dbReference>
<dbReference type="OrthoDB" id="9769623at2"/>
<dbReference type="PhylomeDB" id="Q182I5"/>
<dbReference type="BioCyc" id="PDIF272563:G12WB-2654-MONOMER"/>
<dbReference type="UniPathway" id="UPA00068">
    <property type="reaction ID" value="UER00114"/>
</dbReference>
<dbReference type="Proteomes" id="UP000001978">
    <property type="component" value="Chromosome"/>
</dbReference>
<dbReference type="GO" id="GO:0005829">
    <property type="term" value="C:cytosol"/>
    <property type="evidence" value="ECO:0007669"/>
    <property type="project" value="TreeGrafter"/>
</dbReference>
<dbReference type="GO" id="GO:0004056">
    <property type="term" value="F:argininosuccinate lyase activity"/>
    <property type="evidence" value="ECO:0007669"/>
    <property type="project" value="UniProtKB-UniRule"/>
</dbReference>
<dbReference type="GO" id="GO:0042450">
    <property type="term" value="P:arginine biosynthetic process via ornithine"/>
    <property type="evidence" value="ECO:0007669"/>
    <property type="project" value="InterPro"/>
</dbReference>
<dbReference type="GO" id="GO:0006526">
    <property type="term" value="P:L-arginine biosynthetic process"/>
    <property type="evidence" value="ECO:0007669"/>
    <property type="project" value="UniProtKB-UniRule"/>
</dbReference>
<dbReference type="CDD" id="cd01359">
    <property type="entry name" value="Argininosuccinate_lyase"/>
    <property type="match status" value="1"/>
</dbReference>
<dbReference type="FunFam" id="1.10.275.10:FF:000002">
    <property type="entry name" value="Argininosuccinate lyase"/>
    <property type="match status" value="1"/>
</dbReference>
<dbReference type="FunFam" id="1.10.40.30:FF:000001">
    <property type="entry name" value="Argininosuccinate lyase"/>
    <property type="match status" value="1"/>
</dbReference>
<dbReference type="FunFam" id="1.20.200.10:FF:000002">
    <property type="entry name" value="Argininosuccinate lyase"/>
    <property type="match status" value="1"/>
</dbReference>
<dbReference type="Gene3D" id="1.10.40.30">
    <property type="entry name" value="Fumarase/aspartase (C-terminal domain)"/>
    <property type="match status" value="1"/>
</dbReference>
<dbReference type="Gene3D" id="1.20.200.10">
    <property type="entry name" value="Fumarase/aspartase (Central domain)"/>
    <property type="match status" value="1"/>
</dbReference>
<dbReference type="Gene3D" id="1.10.275.10">
    <property type="entry name" value="Fumarase/aspartase (N-terminal domain)"/>
    <property type="match status" value="1"/>
</dbReference>
<dbReference type="HAMAP" id="MF_00006">
    <property type="entry name" value="Arg_succ_lyase"/>
    <property type="match status" value="1"/>
</dbReference>
<dbReference type="InterPro" id="IPR029419">
    <property type="entry name" value="Arg_succ_lyase_C"/>
</dbReference>
<dbReference type="InterPro" id="IPR009049">
    <property type="entry name" value="Argininosuccinate_lyase"/>
</dbReference>
<dbReference type="InterPro" id="IPR024083">
    <property type="entry name" value="Fumarase/histidase_N"/>
</dbReference>
<dbReference type="InterPro" id="IPR020557">
    <property type="entry name" value="Fumarate_lyase_CS"/>
</dbReference>
<dbReference type="InterPro" id="IPR000362">
    <property type="entry name" value="Fumarate_lyase_fam"/>
</dbReference>
<dbReference type="InterPro" id="IPR022761">
    <property type="entry name" value="Fumarate_lyase_N"/>
</dbReference>
<dbReference type="InterPro" id="IPR008948">
    <property type="entry name" value="L-Aspartase-like"/>
</dbReference>
<dbReference type="NCBIfam" id="TIGR00838">
    <property type="entry name" value="argH"/>
    <property type="match status" value="1"/>
</dbReference>
<dbReference type="PANTHER" id="PTHR43814">
    <property type="entry name" value="ARGININOSUCCINATE LYASE"/>
    <property type="match status" value="1"/>
</dbReference>
<dbReference type="PANTHER" id="PTHR43814:SF1">
    <property type="entry name" value="ARGININOSUCCINATE LYASE"/>
    <property type="match status" value="1"/>
</dbReference>
<dbReference type="Pfam" id="PF14698">
    <property type="entry name" value="ASL_C2"/>
    <property type="match status" value="1"/>
</dbReference>
<dbReference type="Pfam" id="PF00206">
    <property type="entry name" value="Lyase_1"/>
    <property type="match status" value="1"/>
</dbReference>
<dbReference type="PRINTS" id="PR00145">
    <property type="entry name" value="ARGSUCLYASE"/>
</dbReference>
<dbReference type="PRINTS" id="PR00149">
    <property type="entry name" value="FUMRATELYASE"/>
</dbReference>
<dbReference type="SUPFAM" id="SSF48557">
    <property type="entry name" value="L-aspartase-like"/>
    <property type="match status" value="1"/>
</dbReference>
<dbReference type="PROSITE" id="PS00163">
    <property type="entry name" value="FUMARATE_LYASES"/>
    <property type="match status" value="1"/>
</dbReference>
<protein>
    <recommendedName>
        <fullName evidence="1">Argininosuccinate lyase</fullName>
        <shortName evidence="1">ASAL</shortName>
        <ecNumber evidence="1">4.3.2.1</ecNumber>
    </recommendedName>
    <alternativeName>
        <fullName evidence="1">Arginosuccinase</fullName>
    </alternativeName>
</protein>
<proteinExistence type="inferred from homology"/>
<keyword id="KW-0028">Amino-acid biosynthesis</keyword>
<keyword id="KW-0055">Arginine biosynthesis</keyword>
<keyword id="KW-0963">Cytoplasm</keyword>
<keyword id="KW-0456">Lyase</keyword>
<keyword id="KW-1185">Reference proteome</keyword>
<accession>Q182I5</accession>
<comment type="catalytic activity">
    <reaction evidence="1">
        <text>2-(N(omega)-L-arginino)succinate = fumarate + L-arginine</text>
        <dbReference type="Rhea" id="RHEA:24020"/>
        <dbReference type="ChEBI" id="CHEBI:29806"/>
        <dbReference type="ChEBI" id="CHEBI:32682"/>
        <dbReference type="ChEBI" id="CHEBI:57472"/>
        <dbReference type="EC" id="4.3.2.1"/>
    </reaction>
</comment>
<comment type="pathway">
    <text evidence="1">Amino-acid biosynthesis; L-arginine biosynthesis; L-arginine from L-ornithine and carbamoyl phosphate: step 3/3.</text>
</comment>
<comment type="subcellular location">
    <subcellularLocation>
        <location evidence="1">Cytoplasm</location>
    </subcellularLocation>
</comment>
<comment type="similarity">
    <text evidence="1">Belongs to the lyase 1 family. Argininosuccinate lyase subfamily.</text>
</comment>